<dbReference type="EMBL" id="CP001407">
    <property type="protein sequence ID" value="ACO27897.1"/>
    <property type="molecule type" value="Genomic_DNA"/>
</dbReference>
<dbReference type="RefSeq" id="WP_000036341.1">
    <property type="nucleotide sequence ID" value="NZ_CP009318.1"/>
</dbReference>
<dbReference type="SMR" id="C1EP35"/>
<dbReference type="KEGG" id="bcx:BCA_3909"/>
<dbReference type="PATRIC" id="fig|572264.18.peg.3866"/>
<dbReference type="Proteomes" id="UP000002210">
    <property type="component" value="Chromosome"/>
</dbReference>
<dbReference type="GO" id="GO:0005829">
    <property type="term" value="C:cytosol"/>
    <property type="evidence" value="ECO:0007669"/>
    <property type="project" value="TreeGrafter"/>
</dbReference>
<dbReference type="GO" id="GO:0005525">
    <property type="term" value="F:GTP binding"/>
    <property type="evidence" value="ECO:0007669"/>
    <property type="project" value="UniProtKB-KW"/>
</dbReference>
<dbReference type="GO" id="GO:0003924">
    <property type="term" value="F:GTPase activity"/>
    <property type="evidence" value="ECO:0007669"/>
    <property type="project" value="UniProtKB-UniRule"/>
</dbReference>
<dbReference type="GO" id="GO:0003743">
    <property type="term" value="F:translation initiation factor activity"/>
    <property type="evidence" value="ECO:0007669"/>
    <property type="project" value="UniProtKB-UniRule"/>
</dbReference>
<dbReference type="CDD" id="cd01887">
    <property type="entry name" value="IF2_eIF5B"/>
    <property type="match status" value="1"/>
</dbReference>
<dbReference type="CDD" id="cd03702">
    <property type="entry name" value="IF2_mtIF2_II"/>
    <property type="match status" value="1"/>
</dbReference>
<dbReference type="CDD" id="cd03692">
    <property type="entry name" value="mtIF2_IVc"/>
    <property type="match status" value="1"/>
</dbReference>
<dbReference type="FunFam" id="1.10.10.2480:FF:000001">
    <property type="entry name" value="Translation initiation factor IF-2"/>
    <property type="match status" value="1"/>
</dbReference>
<dbReference type="FunFam" id="2.40.30.10:FF:000007">
    <property type="entry name" value="Translation initiation factor IF-2"/>
    <property type="match status" value="1"/>
</dbReference>
<dbReference type="FunFam" id="2.40.30.10:FF:000008">
    <property type="entry name" value="Translation initiation factor IF-2"/>
    <property type="match status" value="1"/>
</dbReference>
<dbReference type="FunFam" id="3.40.50.10050:FF:000001">
    <property type="entry name" value="Translation initiation factor IF-2"/>
    <property type="match status" value="1"/>
</dbReference>
<dbReference type="FunFam" id="3.40.50.300:FF:000019">
    <property type="entry name" value="Translation initiation factor IF-2"/>
    <property type="match status" value="1"/>
</dbReference>
<dbReference type="Gene3D" id="1.10.10.2480">
    <property type="match status" value="1"/>
</dbReference>
<dbReference type="Gene3D" id="3.40.50.300">
    <property type="entry name" value="P-loop containing nucleotide triphosphate hydrolases"/>
    <property type="match status" value="1"/>
</dbReference>
<dbReference type="Gene3D" id="2.40.30.10">
    <property type="entry name" value="Translation factors"/>
    <property type="match status" value="2"/>
</dbReference>
<dbReference type="Gene3D" id="3.40.50.10050">
    <property type="entry name" value="Translation initiation factor IF- 2, domain 3"/>
    <property type="match status" value="1"/>
</dbReference>
<dbReference type="HAMAP" id="MF_00100_B">
    <property type="entry name" value="IF_2_B"/>
    <property type="match status" value="1"/>
</dbReference>
<dbReference type="InterPro" id="IPR053905">
    <property type="entry name" value="EF-G-like_DII"/>
</dbReference>
<dbReference type="InterPro" id="IPR044145">
    <property type="entry name" value="IF2_II"/>
</dbReference>
<dbReference type="InterPro" id="IPR006847">
    <property type="entry name" value="IF2_N"/>
</dbReference>
<dbReference type="InterPro" id="IPR027417">
    <property type="entry name" value="P-loop_NTPase"/>
</dbReference>
<dbReference type="InterPro" id="IPR005225">
    <property type="entry name" value="Small_GTP-bd"/>
</dbReference>
<dbReference type="InterPro" id="IPR000795">
    <property type="entry name" value="T_Tr_GTP-bd_dom"/>
</dbReference>
<dbReference type="InterPro" id="IPR000178">
    <property type="entry name" value="TF_IF2_bacterial-like"/>
</dbReference>
<dbReference type="InterPro" id="IPR015760">
    <property type="entry name" value="TIF_IF2"/>
</dbReference>
<dbReference type="InterPro" id="IPR023115">
    <property type="entry name" value="TIF_IF2_dom3"/>
</dbReference>
<dbReference type="InterPro" id="IPR036925">
    <property type="entry name" value="TIF_IF2_dom3_sf"/>
</dbReference>
<dbReference type="InterPro" id="IPR009000">
    <property type="entry name" value="Transl_B-barrel_sf"/>
</dbReference>
<dbReference type="NCBIfam" id="TIGR00487">
    <property type="entry name" value="IF-2"/>
    <property type="match status" value="1"/>
</dbReference>
<dbReference type="NCBIfam" id="TIGR00231">
    <property type="entry name" value="small_GTP"/>
    <property type="match status" value="1"/>
</dbReference>
<dbReference type="PANTHER" id="PTHR43381:SF5">
    <property type="entry name" value="TR-TYPE G DOMAIN-CONTAINING PROTEIN"/>
    <property type="match status" value="1"/>
</dbReference>
<dbReference type="PANTHER" id="PTHR43381">
    <property type="entry name" value="TRANSLATION INITIATION FACTOR IF-2-RELATED"/>
    <property type="match status" value="1"/>
</dbReference>
<dbReference type="Pfam" id="PF22042">
    <property type="entry name" value="EF-G_D2"/>
    <property type="match status" value="1"/>
</dbReference>
<dbReference type="Pfam" id="PF00009">
    <property type="entry name" value="GTP_EFTU"/>
    <property type="match status" value="1"/>
</dbReference>
<dbReference type="Pfam" id="PF11987">
    <property type="entry name" value="IF-2"/>
    <property type="match status" value="1"/>
</dbReference>
<dbReference type="Pfam" id="PF04760">
    <property type="entry name" value="IF2_N"/>
    <property type="match status" value="2"/>
</dbReference>
<dbReference type="SUPFAM" id="SSF52156">
    <property type="entry name" value="Initiation factor IF2/eIF5b, domain 3"/>
    <property type="match status" value="1"/>
</dbReference>
<dbReference type="SUPFAM" id="SSF52540">
    <property type="entry name" value="P-loop containing nucleoside triphosphate hydrolases"/>
    <property type="match status" value="1"/>
</dbReference>
<dbReference type="SUPFAM" id="SSF50447">
    <property type="entry name" value="Translation proteins"/>
    <property type="match status" value="2"/>
</dbReference>
<dbReference type="PROSITE" id="PS51722">
    <property type="entry name" value="G_TR_2"/>
    <property type="match status" value="1"/>
</dbReference>
<dbReference type="PROSITE" id="PS01176">
    <property type="entry name" value="IF2"/>
    <property type="match status" value="1"/>
</dbReference>
<proteinExistence type="inferred from homology"/>
<gene>
    <name evidence="2" type="primary">infB</name>
    <name type="ordered locus">BCA_3909</name>
</gene>
<name>IF2_BACC3</name>
<comment type="function">
    <text evidence="2">One of the essential components for the initiation of protein synthesis. Protects formylmethionyl-tRNA from spontaneous hydrolysis and promotes its binding to the 30S ribosomal subunits. Also involved in the hydrolysis of GTP during the formation of the 70S ribosomal complex.</text>
</comment>
<comment type="subcellular location">
    <subcellularLocation>
        <location evidence="2">Cytoplasm</location>
    </subcellularLocation>
</comment>
<comment type="similarity">
    <text evidence="2">Belongs to the TRAFAC class translation factor GTPase superfamily. Classic translation factor GTPase family. IF-2 subfamily.</text>
</comment>
<feature type="chain" id="PRO_1000118748" description="Translation initiation factor IF-2">
    <location>
        <begin position="1"/>
        <end position="686"/>
    </location>
</feature>
<feature type="domain" description="tr-type G">
    <location>
        <begin position="188"/>
        <end position="357"/>
    </location>
</feature>
<feature type="region of interest" description="Disordered" evidence="3">
    <location>
        <begin position="54"/>
        <end position="105"/>
    </location>
</feature>
<feature type="region of interest" description="G1" evidence="1">
    <location>
        <begin position="197"/>
        <end position="204"/>
    </location>
</feature>
<feature type="region of interest" description="G2" evidence="1">
    <location>
        <begin position="222"/>
        <end position="226"/>
    </location>
</feature>
<feature type="region of interest" description="G3" evidence="1">
    <location>
        <begin position="243"/>
        <end position="246"/>
    </location>
</feature>
<feature type="region of interest" description="G4" evidence="1">
    <location>
        <begin position="297"/>
        <end position="300"/>
    </location>
</feature>
<feature type="region of interest" description="G5" evidence="1">
    <location>
        <begin position="333"/>
        <end position="335"/>
    </location>
</feature>
<feature type="compositionally biased region" description="Basic residues" evidence="3">
    <location>
        <begin position="69"/>
        <end position="81"/>
    </location>
</feature>
<feature type="binding site" evidence="2">
    <location>
        <begin position="197"/>
        <end position="204"/>
    </location>
    <ligand>
        <name>GTP</name>
        <dbReference type="ChEBI" id="CHEBI:37565"/>
    </ligand>
</feature>
<feature type="binding site" evidence="2">
    <location>
        <begin position="243"/>
        <end position="247"/>
    </location>
    <ligand>
        <name>GTP</name>
        <dbReference type="ChEBI" id="CHEBI:37565"/>
    </ligand>
</feature>
<feature type="binding site" evidence="2">
    <location>
        <begin position="297"/>
        <end position="300"/>
    </location>
    <ligand>
        <name>GTP</name>
        <dbReference type="ChEBI" id="CHEBI:37565"/>
    </ligand>
</feature>
<sequence length="686" mass="75724">MSKIRVHEYAKKHNISSKDLMTKLKEMNIEVSNHMTMLDDEVVNKLDNEYQAEKPSVADEFEVEEKVVRSKKNSNKKKKKGKGNEDKRQENFAGRQQTQTVETPDKITFSGSLTVGDLAKKLSKEPSEIIKKLFMLGIMATINQDLDKDTIELIANDYGIEVEEEVIVSETEFETFIDEQDDEENLKERPAVVTIMGHVDHGKTTLLDSIRNSKVTAGEAGGITQHIGAYQVEVNDKKITFLDTPGHAAFTTMRARGAQVTDITILVVAADDGVMPQTVEAINHAKAAGVPIIVAVNKMDKPAANPDRVMQELTEYELVPEAWGGDTIFVPISAIQGEGIDNLLEMILLVSEVEEYKANPNRYATGTVIEAQLDKGKGTIATLLVQNGTLRVGDPIVVGTSFGRVRAMVSDIGRRVKVAGPSTPVEITGLNEVPQAGDRFMAFADEKKARQIGESRAQEALLAQRGEKSKLSLEDLFQQIQEGDVKEINLIVKADVQGSVEAMAASLRKIDVEGVKVKIIHTGVGAITESDIILASASNAIVIGFNVRPDVNAKRTAELENVDIRLHRIIYKVIEEIEAAMQGMLDPEFEEKVIGQAEVRQTFKVTKVGTIAGCYVTDGKITRDSGVRIIRDGVVIFEGQLDTLKRFKDDVKEVAQNYECGITIERYNDLKEGDIIEAYIMEEVKR</sequence>
<accession>C1EP35</accession>
<evidence type="ECO:0000250" key="1"/>
<evidence type="ECO:0000255" key="2">
    <source>
        <dbReference type="HAMAP-Rule" id="MF_00100"/>
    </source>
</evidence>
<evidence type="ECO:0000256" key="3">
    <source>
        <dbReference type="SAM" id="MobiDB-lite"/>
    </source>
</evidence>
<reference key="1">
    <citation type="submission" date="2009-02" db="EMBL/GenBank/DDBJ databases">
        <title>Genome sequence of Bacillus cereus 03BB102.</title>
        <authorList>
            <person name="Dodson R.J."/>
            <person name="Jackson P."/>
            <person name="Munk A.C."/>
            <person name="Brettin T."/>
            <person name="Bruce D."/>
            <person name="Detter C."/>
            <person name="Tapia R."/>
            <person name="Han C."/>
            <person name="Sutton G."/>
            <person name="Sims D."/>
        </authorList>
    </citation>
    <scope>NUCLEOTIDE SEQUENCE [LARGE SCALE GENOMIC DNA]</scope>
    <source>
        <strain>03BB102</strain>
    </source>
</reference>
<organism>
    <name type="scientific">Bacillus cereus (strain 03BB102)</name>
    <dbReference type="NCBI Taxonomy" id="572264"/>
    <lineage>
        <taxon>Bacteria</taxon>
        <taxon>Bacillati</taxon>
        <taxon>Bacillota</taxon>
        <taxon>Bacilli</taxon>
        <taxon>Bacillales</taxon>
        <taxon>Bacillaceae</taxon>
        <taxon>Bacillus</taxon>
        <taxon>Bacillus cereus group</taxon>
    </lineage>
</organism>
<keyword id="KW-0963">Cytoplasm</keyword>
<keyword id="KW-0342">GTP-binding</keyword>
<keyword id="KW-0396">Initiation factor</keyword>
<keyword id="KW-0547">Nucleotide-binding</keyword>
<keyword id="KW-0648">Protein biosynthesis</keyword>
<protein>
    <recommendedName>
        <fullName evidence="2">Translation initiation factor IF-2</fullName>
    </recommendedName>
</protein>